<sequence>MATSSAWKLDDHPKLPKGKTIAVIVLDGWGESAPDQYNCIHNAPTPAMDSLKHGAPDTWTLIKAHGTAVGLPSEDDMGNSEVGHNALGAGRIFAQGAKLCDQALASGKIFEGEGFKYVSESFETNTLHLVGLLSDGGVHSRLDQLQLLIKGSAERGAKRIRVHILTDGRDVLDGSSVGFVETLEADLVALRENGVDAQIASGGGRMYVTLDRYENDWEVVKRGWDAQVLGEAPHKFKNAVEAVKTLRKEPGANDQYLPPFVIVDESGKAVGPIVDGDAVVTFNFRADRMVMHAKALEYEDFDKFDRVRYPKIRYAGMLQYDGELKLPSRYLVSPPEIDRTSGEYLTHNGVSTFACSETVKFGHVTFFWNGNRSGYFNEKLEEYVEIPSDSGISFNVQPKMKALEIGEKARDAILSGKFDQVRVNIPNGDMVGHTGDIEATVVACEAADLAVKMIFDAIEQVKGIYVVTADHGNAEDMVKRDKSGKPALDKEGKLQILTSHTLKPVPIAIGGPGLAQGVRFRKDLETPGLANVAATVMNLHGFVAPSDYEPTLIEVVE</sequence>
<comment type="function">
    <text evidence="3">Catalyzes the interconversion of 2-phosphoglycerate (2-PGA) and 3-phosphoglycerate (3-PGA) (PubMed:21813794). Required for guard cell function (e.g. blue light-, abscisic acid- (ABA), and low CO(2)-regulated stomatal movements) and fertility (e.g. pollen grains production) (PubMed:21813794).</text>
</comment>
<comment type="catalytic activity">
    <reaction evidence="3">
        <text>(2R)-2-phosphoglycerate = (2R)-3-phosphoglycerate</text>
        <dbReference type="Rhea" id="RHEA:15901"/>
        <dbReference type="ChEBI" id="CHEBI:58272"/>
        <dbReference type="ChEBI" id="CHEBI:58289"/>
        <dbReference type="EC" id="5.4.2.12"/>
    </reaction>
</comment>
<comment type="cofactor">
    <cofactor evidence="2">
        <name>Mn(2+)</name>
        <dbReference type="ChEBI" id="CHEBI:29035"/>
    </cofactor>
    <text evidence="2">Binds 2 manganese ions per subunit.</text>
</comment>
<comment type="pathway">
    <text evidence="2">Carbohydrate degradation; glycolysis; pyruvate from D-glyceraldehyde 3-phosphate: step 3/5.</text>
</comment>
<comment type="subunit">
    <text evidence="2">Monomer.</text>
</comment>
<comment type="subcellular location">
    <subcellularLocation>
        <location evidence="1">Cytoplasm</location>
    </subcellularLocation>
</comment>
<comment type="disruption phenotype">
    <text evidence="3">No visible phenotype (PubMed:21813794). Plants missing both PGM1 and PGM2 have no detectable phosphoglycerate mutase activity and show defects in blue light-, abscisic acid- (ABA), and low CO(2)-regulated stomatal movements (PubMed:21813794). The double mutant ipgam1 ipgam2 exhibits a severely impaired vegetative growth with pale reticulate leaves and don't produce pollen (PubMed:21813794).</text>
</comment>
<comment type="similarity">
    <text evidence="4">Belongs to the BPG-independent phosphoglycerate mutase family.</text>
</comment>
<comment type="sequence caution" evidence="4">
    <conflict type="erroneous gene model prediction">
        <sequence resource="EMBL-CDS" id="AAB60731"/>
    </conflict>
</comment>
<name>PMG1_ARATH</name>
<proteinExistence type="evidence at protein level"/>
<feature type="chain" id="PRO_0000212108" description="2,3-bisphosphoglycerate-independent phosphoglycerate mutase 1">
    <location>
        <begin position="1"/>
        <end position="557"/>
    </location>
</feature>
<feature type="active site" description="Phosphoserine intermediate" evidence="2">
    <location>
        <position position="80"/>
    </location>
</feature>
<feature type="binding site" evidence="2">
    <location>
        <position position="27"/>
    </location>
    <ligand>
        <name>Mn(2+)</name>
        <dbReference type="ChEBI" id="CHEBI:29035"/>
        <label>2</label>
    </ligand>
</feature>
<feature type="binding site" evidence="2">
    <location>
        <position position="80"/>
    </location>
    <ligand>
        <name>Mn(2+)</name>
        <dbReference type="ChEBI" id="CHEBI:29035"/>
        <label>2</label>
    </ligand>
</feature>
<feature type="binding site" evidence="2">
    <location>
        <position position="139"/>
    </location>
    <ligand>
        <name>substrate</name>
    </ligand>
</feature>
<feature type="binding site" evidence="2">
    <location>
        <begin position="169"/>
        <end position="170"/>
    </location>
    <ligand>
        <name>substrate</name>
    </ligand>
</feature>
<feature type="binding site" evidence="2">
    <location>
        <position position="205"/>
    </location>
    <ligand>
        <name>substrate</name>
    </ligand>
</feature>
<feature type="binding site" evidence="2">
    <location>
        <position position="212"/>
    </location>
    <ligand>
        <name>substrate</name>
    </ligand>
</feature>
<feature type="binding site" evidence="2">
    <location>
        <begin position="285"/>
        <end position="288"/>
    </location>
    <ligand>
        <name>substrate</name>
    </ligand>
</feature>
<feature type="binding site" evidence="2">
    <location>
        <position position="360"/>
    </location>
    <ligand>
        <name>substrate</name>
    </ligand>
</feature>
<feature type="binding site" evidence="2">
    <location>
        <position position="429"/>
    </location>
    <ligand>
        <name>Mn(2+)</name>
        <dbReference type="ChEBI" id="CHEBI:29035"/>
        <label>1</label>
    </ligand>
</feature>
<feature type="binding site" evidence="2">
    <location>
        <position position="433"/>
    </location>
    <ligand>
        <name>Mn(2+)</name>
        <dbReference type="ChEBI" id="CHEBI:29035"/>
        <label>1</label>
    </ligand>
</feature>
<feature type="binding site" evidence="2">
    <location>
        <position position="470"/>
    </location>
    <ligand>
        <name>Mn(2+)</name>
        <dbReference type="ChEBI" id="CHEBI:29035"/>
        <label>2</label>
    </ligand>
</feature>
<feature type="binding site" evidence="2">
    <location>
        <position position="471"/>
    </location>
    <ligand>
        <name>Mn(2+)</name>
        <dbReference type="ChEBI" id="CHEBI:29035"/>
        <label>2</label>
    </ligand>
</feature>
<feature type="binding site" evidence="2">
    <location>
        <position position="500"/>
    </location>
    <ligand>
        <name>Mn(2+)</name>
        <dbReference type="ChEBI" id="CHEBI:29035"/>
        <label>1</label>
    </ligand>
</feature>
<feature type="sequence conflict" description="In Ref. 3; AAN31837." evidence="4" ref="3">
    <original>T</original>
    <variation>A</variation>
    <location>
        <position position="124"/>
    </location>
</feature>
<feature type="sequence conflict" description="In Ref. 3; AAL09820." evidence="4" ref="3">
    <original>R</original>
    <variation>G</variation>
    <location>
        <position position="169"/>
    </location>
</feature>
<feature type="sequence conflict" description="In Ref. 3; AAN31837." evidence="4" ref="3">
    <original>F</original>
    <variation>I</variation>
    <location>
        <position position="366"/>
    </location>
</feature>
<feature type="sequence conflict" description="In Ref. 3; AAK73985/AAL87375." evidence="4" ref="3">
    <original>T</original>
    <variation>K</variation>
    <location>
        <position position="535"/>
    </location>
</feature>
<feature type="sequence conflict" description="In Ref. 3; AAN31837." evidence="4" ref="3">
    <original>P</original>
    <variation>L</variation>
    <location>
        <position position="550"/>
    </location>
</feature>
<evidence type="ECO:0000250" key="1"/>
<evidence type="ECO:0000250" key="2">
    <source>
        <dbReference type="UniProtKB" id="Q9X519"/>
    </source>
</evidence>
<evidence type="ECO:0000269" key="3">
    <source>
    </source>
</evidence>
<evidence type="ECO:0000305" key="4"/>
<evidence type="ECO:0000312" key="5">
    <source>
        <dbReference type="Araport" id="AT1G09780"/>
    </source>
</evidence>
<evidence type="ECO:0000312" key="6">
    <source>
        <dbReference type="EMBL" id="AAB60731.1"/>
    </source>
</evidence>
<protein>
    <recommendedName>
        <fullName>2,3-bisphosphoglycerate-independent phosphoglycerate mutase 1</fullName>
        <shortName>BPG-independent PGAM 1</shortName>
        <shortName>Phosphoglyceromutase 1</shortName>
        <ecNumber evidence="3">5.4.2.12</ecNumber>
    </recommendedName>
    <alternativeName>
        <fullName>PGAM-I 1</fullName>
    </alternativeName>
</protein>
<gene>
    <name type="primary">PGM1</name>
    <name evidence="5" type="ordered locus">At1g09780</name>
    <name evidence="6" type="ORF">F21M12.16</name>
</gene>
<dbReference type="EC" id="5.4.2.12" evidence="3"/>
<dbReference type="EMBL" id="AC000132">
    <property type="protein sequence ID" value="AAB60731.1"/>
    <property type="status" value="ALT_SEQ"/>
    <property type="molecule type" value="Genomic_DNA"/>
</dbReference>
<dbReference type="EMBL" id="CP002684">
    <property type="protein sequence ID" value="AEE28491.1"/>
    <property type="molecule type" value="Genomic_DNA"/>
</dbReference>
<dbReference type="EMBL" id="AY045627">
    <property type="protein sequence ID" value="AAK73985.1"/>
    <property type="molecule type" value="mRNA"/>
</dbReference>
<dbReference type="EMBL" id="AY057581">
    <property type="protein sequence ID" value="AAL09820.1"/>
    <property type="molecule type" value="mRNA"/>
</dbReference>
<dbReference type="EMBL" id="AY081722">
    <property type="protein sequence ID" value="AAL87375.1"/>
    <property type="molecule type" value="mRNA"/>
</dbReference>
<dbReference type="EMBL" id="AY150432">
    <property type="protein sequence ID" value="AAN12974.1"/>
    <property type="molecule type" value="mRNA"/>
</dbReference>
<dbReference type="EMBL" id="BT000692">
    <property type="protein sequence ID" value="AAN31837.1"/>
    <property type="molecule type" value="mRNA"/>
</dbReference>
<dbReference type="EMBL" id="BT000773">
    <property type="protein sequence ID" value="AAN31912.1"/>
    <property type="molecule type" value="mRNA"/>
</dbReference>
<dbReference type="EMBL" id="AY086182">
    <property type="protein sequence ID" value="AAM64261.1"/>
    <property type="molecule type" value="mRNA"/>
</dbReference>
<dbReference type="PIR" id="G86231">
    <property type="entry name" value="G86231"/>
</dbReference>
<dbReference type="SMR" id="O04499"/>
<dbReference type="BioGRID" id="22748">
    <property type="interactions" value="23"/>
</dbReference>
<dbReference type="FunCoup" id="O04499">
    <property type="interactions" value="968"/>
</dbReference>
<dbReference type="STRING" id="3702.O04499"/>
<dbReference type="iPTMnet" id="O04499"/>
<dbReference type="MetOSite" id="O04499"/>
<dbReference type="PaxDb" id="3702-AT1G09780.1"/>
<dbReference type="ProteomicsDB" id="234977"/>
<dbReference type="EnsemblPlants" id="AT1G09780.1">
    <property type="protein sequence ID" value="AT1G09780.1"/>
    <property type="gene ID" value="AT1G09780"/>
</dbReference>
<dbReference type="GeneID" id="837507"/>
<dbReference type="Gramene" id="AT1G09780.1">
    <property type="protein sequence ID" value="AT1G09780.1"/>
    <property type="gene ID" value="AT1G09780"/>
</dbReference>
<dbReference type="KEGG" id="ath:AT1G09780"/>
<dbReference type="Araport" id="AT1G09780"/>
<dbReference type="TAIR" id="AT1G09780">
    <property type="gene designation" value="IPGAM1"/>
</dbReference>
<dbReference type="eggNOG" id="KOG4513">
    <property type="taxonomic scope" value="Eukaryota"/>
</dbReference>
<dbReference type="HOGENOM" id="CLU_026099_3_1_1"/>
<dbReference type="InParanoid" id="O04499"/>
<dbReference type="OMA" id="NCIHNAP"/>
<dbReference type="OrthoDB" id="952271at2759"/>
<dbReference type="PhylomeDB" id="O04499"/>
<dbReference type="BioCyc" id="ARA:AT1G09780-MONOMER"/>
<dbReference type="BRENDA" id="5.4.2.12">
    <property type="organism ID" value="399"/>
</dbReference>
<dbReference type="UniPathway" id="UPA00109">
    <property type="reaction ID" value="UER00186"/>
</dbReference>
<dbReference type="CD-CODE" id="4299E36E">
    <property type="entry name" value="Nucleolus"/>
</dbReference>
<dbReference type="PRO" id="PR:O04499"/>
<dbReference type="Proteomes" id="UP000006548">
    <property type="component" value="Chromosome 1"/>
</dbReference>
<dbReference type="ExpressionAtlas" id="O04499">
    <property type="expression patterns" value="baseline and differential"/>
</dbReference>
<dbReference type="GO" id="GO:0009507">
    <property type="term" value="C:chloroplast"/>
    <property type="evidence" value="ECO:0007005"/>
    <property type="project" value="TAIR"/>
</dbReference>
<dbReference type="GO" id="GO:0005829">
    <property type="term" value="C:cytosol"/>
    <property type="evidence" value="ECO:0007005"/>
    <property type="project" value="TAIR"/>
</dbReference>
<dbReference type="GO" id="GO:0005576">
    <property type="term" value="C:extracellular region"/>
    <property type="evidence" value="ECO:0007005"/>
    <property type="project" value="TAIR"/>
</dbReference>
<dbReference type="GO" id="GO:0005740">
    <property type="term" value="C:mitochondrial envelope"/>
    <property type="evidence" value="ECO:0000314"/>
    <property type="project" value="TAIR"/>
</dbReference>
<dbReference type="GO" id="GO:0005886">
    <property type="term" value="C:plasma membrane"/>
    <property type="evidence" value="ECO:0007005"/>
    <property type="project" value="TAIR"/>
</dbReference>
<dbReference type="GO" id="GO:0009506">
    <property type="term" value="C:plasmodesma"/>
    <property type="evidence" value="ECO:0007005"/>
    <property type="project" value="TAIR"/>
</dbReference>
<dbReference type="GO" id="GO:0030145">
    <property type="term" value="F:manganese ion binding"/>
    <property type="evidence" value="ECO:0007669"/>
    <property type="project" value="InterPro"/>
</dbReference>
<dbReference type="GO" id="GO:0004619">
    <property type="term" value="F:phosphoglycerate mutase activity"/>
    <property type="evidence" value="ECO:0000316"/>
    <property type="project" value="UniProtKB"/>
</dbReference>
<dbReference type="GO" id="GO:0006007">
    <property type="term" value="P:glucose catabolic process"/>
    <property type="evidence" value="ECO:0007669"/>
    <property type="project" value="InterPro"/>
</dbReference>
<dbReference type="GO" id="GO:0006096">
    <property type="term" value="P:glycolytic process"/>
    <property type="evidence" value="ECO:0007669"/>
    <property type="project" value="UniProtKB-UniPathway"/>
</dbReference>
<dbReference type="GO" id="GO:0009555">
    <property type="term" value="P:pollen development"/>
    <property type="evidence" value="ECO:0000316"/>
    <property type="project" value="UniProtKB"/>
</dbReference>
<dbReference type="GO" id="GO:0009737">
    <property type="term" value="P:response to abscisic acid"/>
    <property type="evidence" value="ECO:0000316"/>
    <property type="project" value="UniProtKB"/>
</dbReference>
<dbReference type="GO" id="GO:0009637">
    <property type="term" value="P:response to blue light"/>
    <property type="evidence" value="ECO:0000316"/>
    <property type="project" value="UniProtKB"/>
</dbReference>
<dbReference type="GO" id="GO:0010037">
    <property type="term" value="P:response to carbon dioxide"/>
    <property type="evidence" value="ECO:0000316"/>
    <property type="project" value="UniProtKB"/>
</dbReference>
<dbReference type="GO" id="GO:0009409">
    <property type="term" value="P:response to cold"/>
    <property type="evidence" value="ECO:0000270"/>
    <property type="project" value="TAIR"/>
</dbReference>
<dbReference type="GO" id="GO:0010118">
    <property type="term" value="P:stomatal movement"/>
    <property type="evidence" value="ECO:0000316"/>
    <property type="project" value="UniProtKB"/>
</dbReference>
<dbReference type="CDD" id="cd16010">
    <property type="entry name" value="iPGM"/>
    <property type="match status" value="1"/>
</dbReference>
<dbReference type="FunFam" id="3.40.1450.10:FF:000002">
    <property type="entry name" value="2,3-bisphosphoglycerate-independent phosphoglycerate mutase"/>
    <property type="match status" value="1"/>
</dbReference>
<dbReference type="Gene3D" id="3.40.720.10">
    <property type="entry name" value="Alkaline Phosphatase, subunit A"/>
    <property type="match status" value="1"/>
</dbReference>
<dbReference type="Gene3D" id="3.40.1450.10">
    <property type="entry name" value="BPG-independent phosphoglycerate mutase, domain B"/>
    <property type="match status" value="1"/>
</dbReference>
<dbReference type="InterPro" id="IPR017850">
    <property type="entry name" value="Alkaline_phosphatase_core_sf"/>
</dbReference>
<dbReference type="InterPro" id="IPR011258">
    <property type="entry name" value="BPG-indep_PGM_N"/>
</dbReference>
<dbReference type="InterPro" id="IPR006124">
    <property type="entry name" value="Metalloenzyme"/>
</dbReference>
<dbReference type="InterPro" id="IPR036646">
    <property type="entry name" value="PGAM_B_sf"/>
</dbReference>
<dbReference type="InterPro" id="IPR005995">
    <property type="entry name" value="Pgm_bpd_ind"/>
</dbReference>
<dbReference type="NCBIfam" id="TIGR01307">
    <property type="entry name" value="pgm_bpd_ind"/>
    <property type="match status" value="1"/>
</dbReference>
<dbReference type="PANTHER" id="PTHR31637">
    <property type="entry name" value="2,3-BISPHOSPHOGLYCERATE-INDEPENDENT PHOSPHOGLYCERATE MUTASE"/>
    <property type="match status" value="1"/>
</dbReference>
<dbReference type="PANTHER" id="PTHR31637:SF7">
    <property type="entry name" value="2,3-BISPHOSPHOGLYCERATE-INDEPENDENT PHOSPHOGLYCERATE MUTASE 1"/>
    <property type="match status" value="1"/>
</dbReference>
<dbReference type="Pfam" id="PF06415">
    <property type="entry name" value="iPGM_N"/>
    <property type="match status" value="1"/>
</dbReference>
<dbReference type="Pfam" id="PF01676">
    <property type="entry name" value="Metalloenzyme"/>
    <property type="match status" value="1"/>
</dbReference>
<dbReference type="PIRSF" id="PIRSF001492">
    <property type="entry name" value="IPGAM"/>
    <property type="match status" value="1"/>
</dbReference>
<dbReference type="SUPFAM" id="SSF64158">
    <property type="entry name" value="2,3-Bisphosphoglycerate-independent phosphoglycerate mutase, substrate-binding domain"/>
    <property type="match status" value="1"/>
</dbReference>
<dbReference type="SUPFAM" id="SSF53649">
    <property type="entry name" value="Alkaline phosphatase-like"/>
    <property type="match status" value="1"/>
</dbReference>
<keyword id="KW-0963">Cytoplasm</keyword>
<keyword id="KW-0324">Glycolysis</keyword>
<keyword id="KW-0413">Isomerase</keyword>
<keyword id="KW-0464">Manganese</keyword>
<keyword id="KW-0479">Metal-binding</keyword>
<keyword id="KW-1185">Reference proteome</keyword>
<reference key="1">
    <citation type="journal article" date="2000" name="Nature">
        <title>Sequence and analysis of chromosome 1 of the plant Arabidopsis thaliana.</title>
        <authorList>
            <person name="Theologis A."/>
            <person name="Ecker J.R."/>
            <person name="Palm C.J."/>
            <person name="Federspiel N.A."/>
            <person name="Kaul S."/>
            <person name="White O."/>
            <person name="Alonso J."/>
            <person name="Altafi H."/>
            <person name="Araujo R."/>
            <person name="Bowman C.L."/>
            <person name="Brooks S.Y."/>
            <person name="Buehler E."/>
            <person name="Chan A."/>
            <person name="Chao Q."/>
            <person name="Chen H."/>
            <person name="Cheuk R.F."/>
            <person name="Chin C.W."/>
            <person name="Chung M.K."/>
            <person name="Conn L."/>
            <person name="Conway A.B."/>
            <person name="Conway A.R."/>
            <person name="Creasy T.H."/>
            <person name="Dewar K."/>
            <person name="Dunn P."/>
            <person name="Etgu P."/>
            <person name="Feldblyum T.V."/>
            <person name="Feng J.-D."/>
            <person name="Fong B."/>
            <person name="Fujii C.Y."/>
            <person name="Gill J.E."/>
            <person name="Goldsmith A.D."/>
            <person name="Haas B."/>
            <person name="Hansen N.F."/>
            <person name="Hughes B."/>
            <person name="Huizar L."/>
            <person name="Hunter J.L."/>
            <person name="Jenkins J."/>
            <person name="Johnson-Hopson C."/>
            <person name="Khan S."/>
            <person name="Khaykin E."/>
            <person name="Kim C.J."/>
            <person name="Koo H.L."/>
            <person name="Kremenetskaia I."/>
            <person name="Kurtz D.B."/>
            <person name="Kwan A."/>
            <person name="Lam B."/>
            <person name="Langin-Hooper S."/>
            <person name="Lee A."/>
            <person name="Lee J.M."/>
            <person name="Lenz C.A."/>
            <person name="Li J.H."/>
            <person name="Li Y.-P."/>
            <person name="Lin X."/>
            <person name="Liu S.X."/>
            <person name="Liu Z.A."/>
            <person name="Luros J.S."/>
            <person name="Maiti R."/>
            <person name="Marziali A."/>
            <person name="Militscher J."/>
            <person name="Miranda M."/>
            <person name="Nguyen M."/>
            <person name="Nierman W.C."/>
            <person name="Osborne B.I."/>
            <person name="Pai G."/>
            <person name="Peterson J."/>
            <person name="Pham P.K."/>
            <person name="Rizzo M."/>
            <person name="Rooney T."/>
            <person name="Rowley D."/>
            <person name="Sakano H."/>
            <person name="Salzberg S.L."/>
            <person name="Schwartz J.R."/>
            <person name="Shinn P."/>
            <person name="Southwick A.M."/>
            <person name="Sun H."/>
            <person name="Tallon L.J."/>
            <person name="Tambunga G."/>
            <person name="Toriumi M.J."/>
            <person name="Town C.D."/>
            <person name="Utterback T."/>
            <person name="Van Aken S."/>
            <person name="Vaysberg M."/>
            <person name="Vysotskaia V.S."/>
            <person name="Walker M."/>
            <person name="Wu D."/>
            <person name="Yu G."/>
            <person name="Fraser C.M."/>
            <person name="Venter J.C."/>
            <person name="Davis R.W."/>
        </authorList>
    </citation>
    <scope>NUCLEOTIDE SEQUENCE [LARGE SCALE GENOMIC DNA]</scope>
    <source>
        <strain>cv. Columbia</strain>
    </source>
</reference>
<reference key="2">
    <citation type="journal article" date="2017" name="Plant J.">
        <title>Araport11: a complete reannotation of the Arabidopsis thaliana reference genome.</title>
        <authorList>
            <person name="Cheng C.Y."/>
            <person name="Krishnakumar V."/>
            <person name="Chan A.P."/>
            <person name="Thibaud-Nissen F."/>
            <person name="Schobel S."/>
            <person name="Town C.D."/>
        </authorList>
    </citation>
    <scope>GENOME REANNOTATION</scope>
    <source>
        <strain>cv. Columbia</strain>
    </source>
</reference>
<reference key="3">
    <citation type="journal article" date="2003" name="Science">
        <title>Empirical analysis of transcriptional activity in the Arabidopsis genome.</title>
        <authorList>
            <person name="Yamada K."/>
            <person name="Lim J."/>
            <person name="Dale J.M."/>
            <person name="Chen H."/>
            <person name="Shinn P."/>
            <person name="Palm C.J."/>
            <person name="Southwick A.M."/>
            <person name="Wu H.C."/>
            <person name="Kim C.J."/>
            <person name="Nguyen M."/>
            <person name="Pham P.K."/>
            <person name="Cheuk R.F."/>
            <person name="Karlin-Newmann G."/>
            <person name="Liu S.X."/>
            <person name="Lam B."/>
            <person name="Sakano H."/>
            <person name="Wu T."/>
            <person name="Yu G."/>
            <person name="Miranda M."/>
            <person name="Quach H.L."/>
            <person name="Tripp M."/>
            <person name="Chang C.H."/>
            <person name="Lee J.M."/>
            <person name="Toriumi M.J."/>
            <person name="Chan M.M."/>
            <person name="Tang C.C."/>
            <person name="Onodera C.S."/>
            <person name="Deng J.M."/>
            <person name="Akiyama K."/>
            <person name="Ansari Y."/>
            <person name="Arakawa T."/>
            <person name="Banh J."/>
            <person name="Banno F."/>
            <person name="Bowser L."/>
            <person name="Brooks S.Y."/>
            <person name="Carninci P."/>
            <person name="Chao Q."/>
            <person name="Choy N."/>
            <person name="Enju A."/>
            <person name="Goldsmith A.D."/>
            <person name="Gurjal M."/>
            <person name="Hansen N.F."/>
            <person name="Hayashizaki Y."/>
            <person name="Johnson-Hopson C."/>
            <person name="Hsuan V.W."/>
            <person name="Iida K."/>
            <person name="Karnes M."/>
            <person name="Khan S."/>
            <person name="Koesema E."/>
            <person name="Ishida J."/>
            <person name="Jiang P.X."/>
            <person name="Jones T."/>
            <person name="Kawai J."/>
            <person name="Kamiya A."/>
            <person name="Meyers C."/>
            <person name="Nakajima M."/>
            <person name="Narusaka M."/>
            <person name="Seki M."/>
            <person name="Sakurai T."/>
            <person name="Satou M."/>
            <person name="Tamse R."/>
            <person name="Vaysberg M."/>
            <person name="Wallender E.K."/>
            <person name="Wong C."/>
            <person name="Yamamura Y."/>
            <person name="Yuan S."/>
            <person name="Shinozaki K."/>
            <person name="Davis R.W."/>
            <person name="Theologis A."/>
            <person name="Ecker J.R."/>
        </authorList>
    </citation>
    <scope>NUCLEOTIDE SEQUENCE [LARGE SCALE MRNA]</scope>
    <source>
        <strain>cv. Columbia</strain>
    </source>
</reference>
<reference key="4">
    <citation type="submission" date="2002-03" db="EMBL/GenBank/DDBJ databases">
        <title>Full-length cDNA from Arabidopsis thaliana.</title>
        <authorList>
            <person name="Brover V.V."/>
            <person name="Troukhan M.E."/>
            <person name="Alexandrov N.A."/>
            <person name="Lu Y.-P."/>
            <person name="Flavell R.B."/>
            <person name="Feldmann K.A."/>
        </authorList>
    </citation>
    <scope>NUCLEOTIDE SEQUENCE [LARGE SCALE MRNA]</scope>
</reference>
<reference key="5">
    <citation type="journal article" date="2004" name="Plant Physiol.">
        <title>Genomic analysis of the nitrate response using a nitrate reductase-null mutant of Arabidopsis.</title>
        <authorList>
            <person name="Wang R."/>
            <person name="Tischner R."/>
            <person name="Gutierrez R.A."/>
            <person name="Hoffman M."/>
            <person name="Xing X."/>
            <person name="Chen M."/>
            <person name="Coruzzi G."/>
            <person name="Crawford N.M."/>
        </authorList>
    </citation>
    <scope>REVIEW</scope>
</reference>
<reference key="6">
    <citation type="journal article" date="2011" name="J. Exp. Bot.">
        <title>The glycolytic enzyme, phosphoglycerate mutase, has critical roles in stomatal movement, vegetative growth, and pollen production in Arabidopsis thaliana.</title>
        <authorList>
            <person name="Zhao Z."/>
            <person name="Assmann S.M."/>
        </authorList>
    </citation>
    <scope>FUNCTION</scope>
    <scope>DISRUPTION PHENOTYPE</scope>
    <scope>CATALYTIC ACTIVITY</scope>
    <source>
        <strain>cv. Columbia</strain>
    </source>
</reference>
<accession>O04499</accession>
<accession>Q8H161</accession>
<accession>Q8LD62</accession>
<accession>Q93ZF2</accession>
<accession>Q94AY0</accession>
<organism>
    <name type="scientific">Arabidopsis thaliana</name>
    <name type="common">Mouse-ear cress</name>
    <dbReference type="NCBI Taxonomy" id="3702"/>
    <lineage>
        <taxon>Eukaryota</taxon>
        <taxon>Viridiplantae</taxon>
        <taxon>Streptophyta</taxon>
        <taxon>Embryophyta</taxon>
        <taxon>Tracheophyta</taxon>
        <taxon>Spermatophyta</taxon>
        <taxon>Magnoliopsida</taxon>
        <taxon>eudicotyledons</taxon>
        <taxon>Gunneridae</taxon>
        <taxon>Pentapetalae</taxon>
        <taxon>rosids</taxon>
        <taxon>malvids</taxon>
        <taxon>Brassicales</taxon>
        <taxon>Brassicaceae</taxon>
        <taxon>Camelineae</taxon>
        <taxon>Arabidopsis</taxon>
    </lineage>
</organism>